<keyword id="KW-0031">Aminopeptidase</keyword>
<keyword id="KW-0378">Hydrolase</keyword>
<keyword id="KW-0464">Manganese</keyword>
<keyword id="KW-0479">Metal-binding</keyword>
<keyword id="KW-0482">Metalloprotease</keyword>
<keyword id="KW-0645">Protease</keyword>
<keyword id="KW-1185">Reference proteome</keyword>
<organism>
    <name type="scientific">Pyrenophora tritici-repentis (strain Pt-1C-BFP)</name>
    <name type="common">Wheat tan spot fungus</name>
    <name type="synonym">Drechslera tritici-repentis</name>
    <dbReference type="NCBI Taxonomy" id="426418"/>
    <lineage>
        <taxon>Eukaryota</taxon>
        <taxon>Fungi</taxon>
        <taxon>Dikarya</taxon>
        <taxon>Ascomycota</taxon>
        <taxon>Pezizomycotina</taxon>
        <taxon>Dothideomycetes</taxon>
        <taxon>Pleosporomycetidae</taxon>
        <taxon>Pleosporales</taxon>
        <taxon>Pleosporineae</taxon>
        <taxon>Pleosporaceae</taxon>
        <taxon>Pyrenophora</taxon>
    </lineage>
</organism>
<accession>B2WKR4</accession>
<feature type="chain" id="PRO_0000411849" description="Probable Xaa-Pro aminopeptidase PTRG_10574">
    <location>
        <begin position="1"/>
        <end position="660"/>
    </location>
</feature>
<feature type="region of interest" description="Disordered" evidence="2">
    <location>
        <begin position="641"/>
        <end position="660"/>
    </location>
</feature>
<feature type="binding site" evidence="1">
    <location>
        <position position="274"/>
    </location>
    <ligand>
        <name>Mn(2+)</name>
        <dbReference type="ChEBI" id="CHEBI:29035"/>
        <label>2</label>
    </ligand>
</feature>
<feature type="binding site" evidence="1">
    <location>
        <position position="285"/>
    </location>
    <ligand>
        <name>Mn(2+)</name>
        <dbReference type="ChEBI" id="CHEBI:29035"/>
        <label>1</label>
    </ligand>
</feature>
<feature type="binding site" evidence="1">
    <location>
        <position position="285"/>
    </location>
    <ligand>
        <name>Mn(2+)</name>
        <dbReference type="ChEBI" id="CHEBI:29035"/>
        <label>2</label>
    </ligand>
</feature>
<feature type="binding site" evidence="1">
    <location>
        <position position="435"/>
    </location>
    <ligand>
        <name>Mn(2+)</name>
        <dbReference type="ChEBI" id="CHEBI:29035"/>
        <label>1</label>
    </ligand>
</feature>
<feature type="binding site" evidence="1">
    <location>
        <position position="476"/>
    </location>
    <ligand>
        <name>Mn(2+)</name>
        <dbReference type="ChEBI" id="CHEBI:29035"/>
        <label>1</label>
    </ligand>
</feature>
<feature type="binding site" evidence="1">
    <location>
        <position position="476"/>
    </location>
    <ligand>
        <name>Mn(2+)</name>
        <dbReference type="ChEBI" id="CHEBI:29035"/>
        <label>2</label>
    </ligand>
</feature>
<protein>
    <recommendedName>
        <fullName>Probable Xaa-Pro aminopeptidase PTRG_10574</fullName>
        <ecNumber>3.4.11.9</ecNumber>
    </recommendedName>
    <alternativeName>
        <fullName>Aminoacylproline aminopeptidase</fullName>
    </alternativeName>
    <alternativeName>
        <fullName>Prolidase</fullName>
    </alternativeName>
</protein>
<evidence type="ECO:0000250" key="1"/>
<evidence type="ECO:0000256" key="2">
    <source>
        <dbReference type="SAM" id="MobiDB-lite"/>
    </source>
</evidence>
<evidence type="ECO:0000305" key="3"/>
<name>AMPP2_PYRTR</name>
<reference key="1">
    <citation type="journal article" date="2013" name="G3 (Bethesda)">
        <title>Comparative genomics of a plant-pathogenic fungus, Pyrenophora tritici-repentis, reveals transduplication and the impact of repeat elements on pathogenicity and population divergence.</title>
        <authorList>
            <person name="Manning V.A."/>
            <person name="Pandelova I."/>
            <person name="Dhillon B."/>
            <person name="Wilhelm L.J."/>
            <person name="Goodwin S.B."/>
            <person name="Berlin A.M."/>
            <person name="Figueroa M."/>
            <person name="Freitag M."/>
            <person name="Hane J.K."/>
            <person name="Henrissat B."/>
            <person name="Holman W.H."/>
            <person name="Kodira C.D."/>
            <person name="Martin J."/>
            <person name="Oliver R.P."/>
            <person name="Robbertse B."/>
            <person name="Schackwitz W."/>
            <person name="Schwartz D.C."/>
            <person name="Spatafora J.W."/>
            <person name="Turgeon B.G."/>
            <person name="Yandava C."/>
            <person name="Young S."/>
            <person name="Zhou S."/>
            <person name="Zeng Q."/>
            <person name="Grigoriev I.V."/>
            <person name="Ma L.-J."/>
            <person name="Ciuffetti L.M."/>
        </authorList>
    </citation>
    <scope>NUCLEOTIDE SEQUENCE [LARGE SCALE GENOMIC DNA]</scope>
    <source>
        <strain>Pt-1C-BFP</strain>
    </source>
</reference>
<gene>
    <name type="ORF">PTRG_10574</name>
</gene>
<proteinExistence type="inferred from homology"/>
<comment type="function">
    <text evidence="1">Catalyzes the removal of a penultimate prolyl residue from the N-termini of peptides.</text>
</comment>
<comment type="catalytic activity">
    <reaction>
        <text>Release of any N-terminal amino acid, including proline, that is linked to proline, even from a dipeptide or tripeptide.</text>
        <dbReference type="EC" id="3.4.11.9"/>
    </reaction>
</comment>
<comment type="cofactor">
    <cofactor evidence="1">
        <name>Mn(2+)</name>
        <dbReference type="ChEBI" id="CHEBI:29035"/>
    </cofactor>
    <text evidence="1">Binds 2 manganese ions per subunit.</text>
</comment>
<comment type="similarity">
    <text evidence="3">Belongs to the peptidase M24B family.</text>
</comment>
<dbReference type="EC" id="3.4.11.9"/>
<dbReference type="EMBL" id="DS231628">
    <property type="protein sequence ID" value="EDU43624.1"/>
    <property type="molecule type" value="Genomic_DNA"/>
</dbReference>
<dbReference type="RefSeq" id="XP_001940905.1">
    <property type="nucleotide sequence ID" value="XM_001940870.1"/>
</dbReference>
<dbReference type="SMR" id="B2WKR4"/>
<dbReference type="STRING" id="426418.B2WKR4"/>
<dbReference type="EnsemblFungi" id="EDU43624">
    <property type="protein sequence ID" value="EDU43624"/>
    <property type="gene ID" value="PTRG_10574"/>
</dbReference>
<dbReference type="eggNOG" id="KOG2737">
    <property type="taxonomic scope" value="Eukaryota"/>
</dbReference>
<dbReference type="HOGENOM" id="CLU_017266_1_2_1"/>
<dbReference type="InParanoid" id="B2WKR4"/>
<dbReference type="OMA" id="SLQPAMN"/>
<dbReference type="OrthoDB" id="25567at28556"/>
<dbReference type="Proteomes" id="UP000001471">
    <property type="component" value="Unassembled WGS sequence"/>
</dbReference>
<dbReference type="GO" id="GO:0030145">
    <property type="term" value="F:manganese ion binding"/>
    <property type="evidence" value="ECO:0007669"/>
    <property type="project" value="InterPro"/>
</dbReference>
<dbReference type="GO" id="GO:0070006">
    <property type="term" value="F:metalloaminopeptidase activity"/>
    <property type="evidence" value="ECO:0007669"/>
    <property type="project" value="InterPro"/>
</dbReference>
<dbReference type="GO" id="GO:0006508">
    <property type="term" value="P:proteolysis"/>
    <property type="evidence" value="ECO:0007669"/>
    <property type="project" value="UniProtKB-KW"/>
</dbReference>
<dbReference type="CDD" id="cd01087">
    <property type="entry name" value="Prolidase"/>
    <property type="match status" value="1"/>
</dbReference>
<dbReference type="Gene3D" id="3.90.230.10">
    <property type="entry name" value="Creatinase/methionine aminopeptidase superfamily"/>
    <property type="match status" value="1"/>
</dbReference>
<dbReference type="Gene3D" id="3.40.350.10">
    <property type="entry name" value="Creatinase/prolidase N-terminal domain"/>
    <property type="match status" value="1"/>
</dbReference>
<dbReference type="InterPro" id="IPR007865">
    <property type="entry name" value="Aminopep_P_N"/>
</dbReference>
<dbReference type="InterPro" id="IPR029149">
    <property type="entry name" value="Creatin/AminoP/Spt16_N"/>
</dbReference>
<dbReference type="InterPro" id="IPR036005">
    <property type="entry name" value="Creatinase/aminopeptidase-like"/>
</dbReference>
<dbReference type="InterPro" id="IPR000994">
    <property type="entry name" value="Pept_M24"/>
</dbReference>
<dbReference type="InterPro" id="IPR001131">
    <property type="entry name" value="Peptidase_M24B_aminopep-P_CS"/>
</dbReference>
<dbReference type="InterPro" id="IPR052433">
    <property type="entry name" value="X-Pro_dipept-like"/>
</dbReference>
<dbReference type="PANTHER" id="PTHR43226">
    <property type="entry name" value="XAA-PRO AMINOPEPTIDASE 3"/>
    <property type="match status" value="1"/>
</dbReference>
<dbReference type="PANTHER" id="PTHR43226:SF3">
    <property type="entry name" value="XAA-PRO AMINOPEPTIDASE AN0832-RELATED"/>
    <property type="match status" value="1"/>
</dbReference>
<dbReference type="Pfam" id="PF05195">
    <property type="entry name" value="AMP_N"/>
    <property type="match status" value="1"/>
</dbReference>
<dbReference type="Pfam" id="PF00557">
    <property type="entry name" value="Peptidase_M24"/>
    <property type="match status" value="1"/>
</dbReference>
<dbReference type="SMART" id="SM01011">
    <property type="entry name" value="AMP_N"/>
    <property type="match status" value="1"/>
</dbReference>
<dbReference type="SUPFAM" id="SSF55920">
    <property type="entry name" value="Creatinase/aminopeptidase"/>
    <property type="match status" value="1"/>
</dbReference>
<dbReference type="SUPFAM" id="SSF53092">
    <property type="entry name" value="Creatinase/prolidase N-terminal domain"/>
    <property type="match status" value="1"/>
</dbReference>
<dbReference type="PROSITE" id="PS00491">
    <property type="entry name" value="PROLINE_PEPTIDASE"/>
    <property type="match status" value="1"/>
</dbReference>
<sequence length="660" mass="74551">MEVLDATGLAERLRWEDNDYLLHLKAETSFDKYPAKQHARRVQAELGVEDGLIYLPGQPARNNEDSDMPAPFRQRRYFYYMSGCDEPDCHLMYDIRRDVLTLFIPRIKPERVIWNGRGSTPAEALAKYDIDQVHHSQDLAYIIQNWAFKHQNTGIYILHPSSRIPGCDNLMPRIDSHSLQPAMNLCRMIKDDHEIKRIRKANDISSQAHREVLANIQKYKNEAQVEGLFMDVCISRQAKQQAYDPIAASGPNAGTLHYDANNEDLAGRQLMCLDAGCEFELYASDITRTFPLSASWPSKEAENIYNLVQRMQETCIERLEPGVRYLDLHIMAHQVAIDGLLRLGILCNGTREEIYKAGTSRAFFPHGLGHHIGLEVHDVGQAELMSVRRGKPVYQQAPSLYPENFHDPVYDSETCHAPTDPQSSHLEEGMVVTVEPGIYFSVYALQHFYLPSPIHSKFINLEVLERYLPVGGVRIEDDILITANGHENLTTAPKGEAMLDMIRQGKPGTTDVLIPSPTYSRRMRSENNTPRLCAPGISKNTLRPLLTPLARAATLPTEFRQQDDFDFEPTVGPSLFSGFSRAMTTEEKIQQWKQKRDSVPVALNRPTKAKSLSPVCGENTPNVQHVYMSTASDLASFSQLSAGSGSTPLWKPHNKQDKKN</sequence>